<proteinExistence type="inferred from homology"/>
<gene>
    <name evidence="1" type="primary">rplT</name>
    <name type="ordered locus">BCI_0469</name>
</gene>
<dbReference type="EMBL" id="CP000238">
    <property type="protein sequence ID" value="ABF14025.1"/>
    <property type="molecule type" value="Genomic_DNA"/>
</dbReference>
<dbReference type="RefSeq" id="WP_011520640.1">
    <property type="nucleotide sequence ID" value="NC_007984.1"/>
</dbReference>
<dbReference type="SMR" id="Q1LT07"/>
<dbReference type="STRING" id="374463.BCI_0469"/>
<dbReference type="KEGG" id="bci:BCI_0469"/>
<dbReference type="HOGENOM" id="CLU_123265_0_1_6"/>
<dbReference type="OrthoDB" id="9808966at2"/>
<dbReference type="Proteomes" id="UP000002427">
    <property type="component" value="Chromosome"/>
</dbReference>
<dbReference type="GO" id="GO:1990904">
    <property type="term" value="C:ribonucleoprotein complex"/>
    <property type="evidence" value="ECO:0007669"/>
    <property type="project" value="UniProtKB-KW"/>
</dbReference>
<dbReference type="GO" id="GO:0005840">
    <property type="term" value="C:ribosome"/>
    <property type="evidence" value="ECO:0007669"/>
    <property type="project" value="UniProtKB-KW"/>
</dbReference>
<dbReference type="GO" id="GO:0019843">
    <property type="term" value="F:rRNA binding"/>
    <property type="evidence" value="ECO:0007669"/>
    <property type="project" value="UniProtKB-UniRule"/>
</dbReference>
<dbReference type="GO" id="GO:0003735">
    <property type="term" value="F:structural constituent of ribosome"/>
    <property type="evidence" value="ECO:0007669"/>
    <property type="project" value="InterPro"/>
</dbReference>
<dbReference type="GO" id="GO:0000027">
    <property type="term" value="P:ribosomal large subunit assembly"/>
    <property type="evidence" value="ECO:0007669"/>
    <property type="project" value="UniProtKB-UniRule"/>
</dbReference>
<dbReference type="GO" id="GO:0006412">
    <property type="term" value="P:translation"/>
    <property type="evidence" value="ECO:0007669"/>
    <property type="project" value="InterPro"/>
</dbReference>
<dbReference type="CDD" id="cd07026">
    <property type="entry name" value="Ribosomal_L20"/>
    <property type="match status" value="1"/>
</dbReference>
<dbReference type="FunFam" id="1.10.1900.20:FF:000001">
    <property type="entry name" value="50S ribosomal protein L20"/>
    <property type="match status" value="1"/>
</dbReference>
<dbReference type="Gene3D" id="6.10.160.10">
    <property type="match status" value="1"/>
</dbReference>
<dbReference type="Gene3D" id="1.10.1900.20">
    <property type="entry name" value="Ribosomal protein L20"/>
    <property type="match status" value="1"/>
</dbReference>
<dbReference type="HAMAP" id="MF_00382">
    <property type="entry name" value="Ribosomal_bL20"/>
    <property type="match status" value="1"/>
</dbReference>
<dbReference type="InterPro" id="IPR005813">
    <property type="entry name" value="Ribosomal_bL20"/>
</dbReference>
<dbReference type="InterPro" id="IPR049946">
    <property type="entry name" value="RIBOSOMAL_L20_CS"/>
</dbReference>
<dbReference type="InterPro" id="IPR035566">
    <property type="entry name" value="Ribosomal_protein_bL20_C"/>
</dbReference>
<dbReference type="NCBIfam" id="TIGR01032">
    <property type="entry name" value="rplT_bact"/>
    <property type="match status" value="1"/>
</dbReference>
<dbReference type="PANTHER" id="PTHR10986">
    <property type="entry name" value="39S RIBOSOMAL PROTEIN L20"/>
    <property type="match status" value="1"/>
</dbReference>
<dbReference type="Pfam" id="PF00453">
    <property type="entry name" value="Ribosomal_L20"/>
    <property type="match status" value="1"/>
</dbReference>
<dbReference type="PRINTS" id="PR00062">
    <property type="entry name" value="RIBOSOMALL20"/>
</dbReference>
<dbReference type="SUPFAM" id="SSF74731">
    <property type="entry name" value="Ribosomal protein L20"/>
    <property type="match status" value="1"/>
</dbReference>
<dbReference type="PROSITE" id="PS00937">
    <property type="entry name" value="RIBOSOMAL_L20"/>
    <property type="match status" value="1"/>
</dbReference>
<organism>
    <name type="scientific">Baumannia cicadellinicola subsp. Homalodisca coagulata</name>
    <dbReference type="NCBI Taxonomy" id="374463"/>
    <lineage>
        <taxon>Bacteria</taxon>
        <taxon>Pseudomonadati</taxon>
        <taxon>Pseudomonadota</taxon>
        <taxon>Gammaproteobacteria</taxon>
        <taxon>Candidatus Palibaumannia</taxon>
    </lineage>
</organism>
<reference key="1">
    <citation type="journal article" date="2006" name="PLoS Biol.">
        <title>Metabolic complementarity and genomics of the dual bacterial symbiosis of sharpshooters.</title>
        <authorList>
            <person name="Wu D."/>
            <person name="Daugherty S.C."/>
            <person name="Van Aken S.E."/>
            <person name="Pai G.H."/>
            <person name="Watkins K.L."/>
            <person name="Khouri H."/>
            <person name="Tallon L.J."/>
            <person name="Zaborsky J.M."/>
            <person name="Dunbar H.E."/>
            <person name="Tran P.L."/>
            <person name="Moran N.A."/>
            <person name="Eisen J.A."/>
        </authorList>
    </citation>
    <scope>NUCLEOTIDE SEQUENCE [LARGE SCALE GENOMIC DNA]</scope>
</reference>
<evidence type="ECO:0000255" key="1">
    <source>
        <dbReference type="HAMAP-Rule" id="MF_00382"/>
    </source>
</evidence>
<evidence type="ECO:0000305" key="2"/>
<protein>
    <recommendedName>
        <fullName evidence="1">Large ribosomal subunit protein bL20</fullName>
    </recommendedName>
    <alternativeName>
        <fullName evidence="2">50S ribosomal protein L20</fullName>
    </alternativeName>
</protein>
<sequence>MARVKRGVVARARHKKVLKLANGYYGARSRVYRVAFQAVLKAGQYCYRDRRCKKRQFRKLWITRINAAVRQHGITYSCFMNSLKKASIHIDRKILAEIAISDKVAFATLAEKAKSILCVT</sequence>
<feature type="chain" id="PRO_1000048930" description="Large ribosomal subunit protein bL20">
    <location>
        <begin position="1"/>
        <end position="120"/>
    </location>
</feature>
<name>RL20_BAUCH</name>
<accession>Q1LT07</accession>
<comment type="function">
    <text evidence="1">Binds directly to 23S ribosomal RNA and is necessary for the in vitro assembly process of the 50S ribosomal subunit. It is not involved in the protein synthesizing functions of that subunit.</text>
</comment>
<comment type="similarity">
    <text evidence="1">Belongs to the bacterial ribosomal protein bL20 family.</text>
</comment>
<keyword id="KW-1185">Reference proteome</keyword>
<keyword id="KW-0687">Ribonucleoprotein</keyword>
<keyword id="KW-0689">Ribosomal protein</keyword>
<keyword id="KW-0694">RNA-binding</keyword>
<keyword id="KW-0699">rRNA-binding</keyword>